<protein>
    <recommendedName>
        <fullName evidence="5">Renin</fullName>
        <ecNumber evidence="1">3.4.23.15</ecNumber>
    </recommendedName>
    <alternativeName>
        <fullName>Angiotensinogenase</fullName>
    </alternativeName>
</protein>
<gene>
    <name type="primary">REN</name>
</gene>
<name>RENI_MACFA</name>
<dbReference type="EC" id="3.4.23.15" evidence="1"/>
<dbReference type="EMBL" id="AY664490">
    <property type="protein sequence ID" value="AAT75162.1"/>
    <property type="molecule type" value="mRNA"/>
</dbReference>
<dbReference type="SMR" id="Q6DLS0"/>
<dbReference type="STRING" id="9541.ENSMFAP00000009069"/>
<dbReference type="BindingDB" id="Q6DLS0"/>
<dbReference type="ChEMBL" id="CHEMBL2046264"/>
<dbReference type="DrugCentral" id="Q6DLS0"/>
<dbReference type="MEROPS" id="A01.007"/>
<dbReference type="GlyCosmos" id="Q6DLS0">
    <property type="glycosylation" value="2 sites, No reported glycans"/>
</dbReference>
<dbReference type="eggNOG" id="KOG1339">
    <property type="taxonomic scope" value="Eukaryota"/>
</dbReference>
<dbReference type="Proteomes" id="UP000233100">
    <property type="component" value="Unplaced"/>
</dbReference>
<dbReference type="GO" id="GO:0005615">
    <property type="term" value="C:extracellular space"/>
    <property type="evidence" value="ECO:0007669"/>
    <property type="project" value="UniProtKB-ARBA"/>
</dbReference>
<dbReference type="GO" id="GO:0016020">
    <property type="term" value="C:membrane"/>
    <property type="evidence" value="ECO:0007669"/>
    <property type="project" value="UniProtKB-SubCell"/>
</dbReference>
<dbReference type="GO" id="GO:0004190">
    <property type="term" value="F:aspartic-type endopeptidase activity"/>
    <property type="evidence" value="ECO:0007669"/>
    <property type="project" value="UniProtKB-KW"/>
</dbReference>
<dbReference type="GO" id="GO:0002003">
    <property type="term" value="P:angiotensin maturation"/>
    <property type="evidence" value="ECO:0007669"/>
    <property type="project" value="TreeGrafter"/>
</dbReference>
<dbReference type="CDD" id="cd05487">
    <property type="entry name" value="renin_like"/>
    <property type="match status" value="1"/>
</dbReference>
<dbReference type="FunFam" id="2.40.70.10:FF:000037">
    <property type="entry name" value="Renin"/>
    <property type="match status" value="1"/>
</dbReference>
<dbReference type="FunFam" id="2.40.70.10:FF:000032">
    <property type="entry name" value="renin"/>
    <property type="match status" value="1"/>
</dbReference>
<dbReference type="Gene3D" id="2.40.70.10">
    <property type="entry name" value="Acid Proteases"/>
    <property type="match status" value="2"/>
</dbReference>
<dbReference type="InterPro" id="IPR001461">
    <property type="entry name" value="Aspartic_peptidase_A1"/>
</dbReference>
<dbReference type="InterPro" id="IPR001969">
    <property type="entry name" value="Aspartic_peptidase_AS"/>
</dbReference>
<dbReference type="InterPro" id="IPR012848">
    <property type="entry name" value="Aspartic_peptidase_N"/>
</dbReference>
<dbReference type="InterPro" id="IPR033121">
    <property type="entry name" value="PEPTIDASE_A1"/>
</dbReference>
<dbReference type="InterPro" id="IPR021109">
    <property type="entry name" value="Peptidase_aspartic_dom_sf"/>
</dbReference>
<dbReference type="InterPro" id="IPR034135">
    <property type="entry name" value="Renin-like_dom"/>
</dbReference>
<dbReference type="PANTHER" id="PTHR47966">
    <property type="entry name" value="BETA-SITE APP-CLEAVING ENZYME, ISOFORM A-RELATED"/>
    <property type="match status" value="1"/>
</dbReference>
<dbReference type="PANTHER" id="PTHR47966:SF24">
    <property type="entry name" value="RENIN"/>
    <property type="match status" value="1"/>
</dbReference>
<dbReference type="Pfam" id="PF07966">
    <property type="entry name" value="A1_Propeptide"/>
    <property type="match status" value="1"/>
</dbReference>
<dbReference type="Pfam" id="PF00026">
    <property type="entry name" value="Asp"/>
    <property type="match status" value="1"/>
</dbReference>
<dbReference type="PRINTS" id="PR00792">
    <property type="entry name" value="PEPSIN"/>
</dbReference>
<dbReference type="SUPFAM" id="SSF50630">
    <property type="entry name" value="Acid proteases"/>
    <property type="match status" value="1"/>
</dbReference>
<dbReference type="PROSITE" id="PS00141">
    <property type="entry name" value="ASP_PROTEASE"/>
    <property type="match status" value="2"/>
</dbReference>
<dbReference type="PROSITE" id="PS51767">
    <property type="entry name" value="PEPTIDASE_A1"/>
    <property type="match status" value="1"/>
</dbReference>
<reference key="1">
    <citation type="submission" date="2004-06" db="EMBL/GenBank/DDBJ databases">
        <title>Cloning and sequence analysis of cDNA for cynomolgus renin precursor.</title>
        <authorList>
            <person name="Cappiello M.G."/>
        </authorList>
    </citation>
    <scope>NUCLEOTIDE SEQUENCE [MRNA]</scope>
</reference>
<feature type="signal peptide" evidence="1">
    <location>
        <begin position="1"/>
        <end position="23"/>
    </location>
</feature>
<feature type="propeptide" id="PRO_0000026083" description="Activation peptide" evidence="1">
    <location>
        <begin position="24"/>
        <end position="66"/>
    </location>
</feature>
<feature type="chain" id="PRO_0000026084" description="Renin">
    <location>
        <begin position="67"/>
        <end position="406"/>
    </location>
</feature>
<feature type="domain" description="Peptidase A1" evidence="3">
    <location>
        <begin position="86"/>
        <end position="403"/>
    </location>
</feature>
<feature type="active site" evidence="4">
    <location>
        <position position="104"/>
    </location>
</feature>
<feature type="active site" evidence="4">
    <location>
        <position position="292"/>
    </location>
</feature>
<feature type="glycosylation site" description="N-linked (GlcNAc...) asparagine" evidence="2">
    <location>
        <position position="71"/>
    </location>
</feature>
<feature type="glycosylation site" description="N-linked (GlcNAc...) asparagine" evidence="2">
    <location>
        <position position="141"/>
    </location>
</feature>
<feature type="disulfide bond" evidence="1">
    <location>
        <begin position="117"/>
        <end position="124"/>
    </location>
</feature>
<feature type="disulfide bond" evidence="1">
    <location>
        <begin position="283"/>
        <end position="287"/>
    </location>
</feature>
<feature type="disulfide bond" evidence="1">
    <location>
        <begin position="325"/>
        <end position="362"/>
    </location>
</feature>
<keyword id="KW-0064">Aspartyl protease</keyword>
<keyword id="KW-0165">Cleavage on pair of basic residues</keyword>
<keyword id="KW-1015">Disulfide bond</keyword>
<keyword id="KW-0325">Glycoprotein</keyword>
<keyword id="KW-0378">Hydrolase</keyword>
<keyword id="KW-0472">Membrane</keyword>
<keyword id="KW-0645">Protease</keyword>
<keyword id="KW-1185">Reference proteome</keyword>
<keyword id="KW-0964">Secreted</keyword>
<keyword id="KW-0732">Signal</keyword>
<keyword id="KW-0865">Zymogen</keyword>
<comment type="function">
    <text evidence="1">Renin is a highly specific endopeptidase, whose only known function is to generate angiotensin I from angiotensinogen in the plasma, initiating a cascade of reactions that produce an elevation of blood pressure and increased sodium retention by the kidney.</text>
</comment>
<comment type="catalytic activity">
    <reaction evidence="1">
        <text>Cleavage of Leu-|-Xaa bond in angiotensinogen to generate angiotensin I.</text>
        <dbReference type="EC" id="3.4.23.15"/>
    </reaction>
</comment>
<comment type="activity regulation">
    <text evidence="1">Interaction with ATP6AP2 results in a 5-fold increased efficiency in angiotensinogen processing.</text>
</comment>
<comment type="subunit">
    <text evidence="1">Interacts with ATP6AP2.</text>
</comment>
<comment type="subcellular location">
    <subcellularLocation>
        <location evidence="1">Secreted</location>
    </subcellularLocation>
    <subcellularLocation>
        <location evidence="1">Membrane</location>
    </subcellularLocation>
    <text evidence="1">Associated to membranes via binding to ATP6AP2.</text>
</comment>
<comment type="similarity">
    <text evidence="6">Belongs to the peptidase A1 family.</text>
</comment>
<organism>
    <name type="scientific">Macaca fascicularis</name>
    <name type="common">Crab-eating macaque</name>
    <name type="synonym">Cynomolgus monkey</name>
    <dbReference type="NCBI Taxonomy" id="9541"/>
    <lineage>
        <taxon>Eukaryota</taxon>
        <taxon>Metazoa</taxon>
        <taxon>Chordata</taxon>
        <taxon>Craniata</taxon>
        <taxon>Vertebrata</taxon>
        <taxon>Euteleostomi</taxon>
        <taxon>Mammalia</taxon>
        <taxon>Eutheria</taxon>
        <taxon>Euarchontoglires</taxon>
        <taxon>Primates</taxon>
        <taxon>Haplorrhini</taxon>
        <taxon>Catarrhini</taxon>
        <taxon>Cercopithecidae</taxon>
        <taxon>Cercopithecinae</taxon>
        <taxon>Macaca</taxon>
    </lineage>
</organism>
<accession>Q6DLS0</accession>
<proteinExistence type="evidence at transcript level"/>
<sequence>MDGWRRMPRWGLLLLLWGSCTFGLPTDTTTFKRIFLKRMPSIRESLKERGVDMARLGPEWSQPMKRLALGNTTSSVILTNYMDTQYYGEIGIGTPPQTFKVVFDTGSSNVWVPSSKCSRLYTACVYHKLFDASDSSSYKHNGTELTLRYSTGTVSGFLSQDIITVGGITVTQMFGEVTEMPALPFMLAEFDGVVGMGFIEQAIGRVTPIFDNILSQGVLKEDVFSFYYNRDSENAQSLGGQIVLGGSDPQHYEGNFHYINLIKTGVWQIQMKGVSVGSSTLLCEDGCLALVDTGASYISGSTSSIEKLMEALGAKKRLFDYVVKCNEGPTLPDISFHLGGKEYTLTSADYVFQESYSSKKLCTLAIHAMDIPPPTGPTWALGATFIRKFYTEFDRRNNRIGFALAR</sequence>
<evidence type="ECO:0000250" key="1">
    <source>
        <dbReference type="UniProtKB" id="P00797"/>
    </source>
</evidence>
<evidence type="ECO:0000255" key="2"/>
<evidence type="ECO:0000255" key="3">
    <source>
        <dbReference type="PROSITE-ProRule" id="PRU01103"/>
    </source>
</evidence>
<evidence type="ECO:0000255" key="4">
    <source>
        <dbReference type="PROSITE-ProRule" id="PRU10094"/>
    </source>
</evidence>
<evidence type="ECO:0000303" key="5">
    <source ref="1"/>
</evidence>
<evidence type="ECO:0000305" key="6"/>